<accession>B1ZFQ7</accession>
<dbReference type="EMBL" id="CP001029">
    <property type="protein sequence ID" value="ACB82516.1"/>
    <property type="molecule type" value="Genomic_DNA"/>
</dbReference>
<dbReference type="RefSeq" id="WP_004446294.1">
    <property type="nucleotide sequence ID" value="NC_010725.1"/>
</dbReference>
<dbReference type="SMR" id="B1ZFQ7"/>
<dbReference type="STRING" id="441620.Mpop_4416"/>
<dbReference type="GeneID" id="72991657"/>
<dbReference type="KEGG" id="mpo:Mpop_4416"/>
<dbReference type="eggNOG" id="COG0238">
    <property type="taxonomic scope" value="Bacteria"/>
</dbReference>
<dbReference type="HOGENOM" id="CLU_148710_2_2_5"/>
<dbReference type="OrthoDB" id="9812008at2"/>
<dbReference type="Proteomes" id="UP000007136">
    <property type="component" value="Chromosome"/>
</dbReference>
<dbReference type="GO" id="GO:0022627">
    <property type="term" value="C:cytosolic small ribosomal subunit"/>
    <property type="evidence" value="ECO:0007669"/>
    <property type="project" value="TreeGrafter"/>
</dbReference>
<dbReference type="GO" id="GO:0070181">
    <property type="term" value="F:small ribosomal subunit rRNA binding"/>
    <property type="evidence" value="ECO:0007669"/>
    <property type="project" value="TreeGrafter"/>
</dbReference>
<dbReference type="GO" id="GO:0003735">
    <property type="term" value="F:structural constituent of ribosome"/>
    <property type="evidence" value="ECO:0007669"/>
    <property type="project" value="InterPro"/>
</dbReference>
<dbReference type="GO" id="GO:0006412">
    <property type="term" value="P:translation"/>
    <property type="evidence" value="ECO:0007669"/>
    <property type="project" value="UniProtKB-UniRule"/>
</dbReference>
<dbReference type="FunFam" id="4.10.640.10:FF:000006">
    <property type="entry name" value="30S ribosomal protein S18"/>
    <property type="match status" value="1"/>
</dbReference>
<dbReference type="Gene3D" id="4.10.640.10">
    <property type="entry name" value="Ribosomal protein S18"/>
    <property type="match status" value="1"/>
</dbReference>
<dbReference type="HAMAP" id="MF_00270">
    <property type="entry name" value="Ribosomal_bS18"/>
    <property type="match status" value="1"/>
</dbReference>
<dbReference type="InterPro" id="IPR001648">
    <property type="entry name" value="Ribosomal_bS18"/>
</dbReference>
<dbReference type="InterPro" id="IPR018275">
    <property type="entry name" value="Ribosomal_bS18_CS"/>
</dbReference>
<dbReference type="InterPro" id="IPR036870">
    <property type="entry name" value="Ribosomal_bS18_sf"/>
</dbReference>
<dbReference type="NCBIfam" id="TIGR00165">
    <property type="entry name" value="S18"/>
    <property type="match status" value="1"/>
</dbReference>
<dbReference type="PANTHER" id="PTHR13479">
    <property type="entry name" value="30S RIBOSOMAL PROTEIN S18"/>
    <property type="match status" value="1"/>
</dbReference>
<dbReference type="PANTHER" id="PTHR13479:SF40">
    <property type="entry name" value="SMALL RIBOSOMAL SUBUNIT PROTEIN BS18M"/>
    <property type="match status" value="1"/>
</dbReference>
<dbReference type="Pfam" id="PF01084">
    <property type="entry name" value="Ribosomal_S18"/>
    <property type="match status" value="1"/>
</dbReference>
<dbReference type="PRINTS" id="PR00974">
    <property type="entry name" value="RIBOSOMALS18"/>
</dbReference>
<dbReference type="SUPFAM" id="SSF46911">
    <property type="entry name" value="Ribosomal protein S18"/>
    <property type="match status" value="1"/>
</dbReference>
<dbReference type="PROSITE" id="PS00057">
    <property type="entry name" value="RIBOSOMAL_S18"/>
    <property type="match status" value="1"/>
</dbReference>
<sequence length="84" mass="9342">MAFGAGGGGGGRRPFFRRRKSCPFSGENAPKIDYKDVKLLSRYVSERGKIVPSRITAVSAKKQRELAQAIKRSRFLGLLPYVIK</sequence>
<reference key="1">
    <citation type="submission" date="2008-04" db="EMBL/GenBank/DDBJ databases">
        <title>Complete sequence of chromosome of Methylobacterium populi BJ001.</title>
        <authorList>
            <consortium name="US DOE Joint Genome Institute"/>
            <person name="Copeland A."/>
            <person name="Lucas S."/>
            <person name="Lapidus A."/>
            <person name="Glavina del Rio T."/>
            <person name="Dalin E."/>
            <person name="Tice H."/>
            <person name="Bruce D."/>
            <person name="Goodwin L."/>
            <person name="Pitluck S."/>
            <person name="Chertkov O."/>
            <person name="Brettin T."/>
            <person name="Detter J.C."/>
            <person name="Han C."/>
            <person name="Kuske C.R."/>
            <person name="Schmutz J."/>
            <person name="Larimer F."/>
            <person name="Land M."/>
            <person name="Hauser L."/>
            <person name="Kyrpides N."/>
            <person name="Mikhailova N."/>
            <person name="Marx C."/>
            <person name="Richardson P."/>
        </authorList>
    </citation>
    <scope>NUCLEOTIDE SEQUENCE [LARGE SCALE GENOMIC DNA]</scope>
    <source>
        <strain>ATCC BAA-705 / NCIMB 13946 / BJ001</strain>
    </source>
</reference>
<gene>
    <name evidence="1" type="primary">rpsR</name>
    <name type="ordered locus">Mpop_4416</name>
</gene>
<proteinExistence type="inferred from homology"/>
<evidence type="ECO:0000255" key="1">
    <source>
        <dbReference type="HAMAP-Rule" id="MF_00270"/>
    </source>
</evidence>
<evidence type="ECO:0000305" key="2"/>
<keyword id="KW-0687">Ribonucleoprotein</keyword>
<keyword id="KW-0689">Ribosomal protein</keyword>
<keyword id="KW-0694">RNA-binding</keyword>
<keyword id="KW-0699">rRNA-binding</keyword>
<protein>
    <recommendedName>
        <fullName evidence="1">Small ribosomal subunit protein bS18</fullName>
    </recommendedName>
    <alternativeName>
        <fullName evidence="2">30S ribosomal protein S18</fullName>
    </alternativeName>
</protein>
<organism>
    <name type="scientific">Methylorubrum populi (strain ATCC BAA-705 / NCIMB 13946 / BJ001)</name>
    <name type="common">Methylobacterium populi</name>
    <dbReference type="NCBI Taxonomy" id="441620"/>
    <lineage>
        <taxon>Bacteria</taxon>
        <taxon>Pseudomonadati</taxon>
        <taxon>Pseudomonadota</taxon>
        <taxon>Alphaproteobacteria</taxon>
        <taxon>Hyphomicrobiales</taxon>
        <taxon>Methylobacteriaceae</taxon>
        <taxon>Methylorubrum</taxon>
    </lineage>
</organism>
<feature type="chain" id="PRO_0000345494" description="Small ribosomal subunit protein bS18">
    <location>
        <begin position="1"/>
        <end position="84"/>
    </location>
</feature>
<comment type="function">
    <text evidence="1">Binds as a heterodimer with protein bS6 to the central domain of the 16S rRNA, where it helps stabilize the platform of the 30S subunit.</text>
</comment>
<comment type="subunit">
    <text evidence="1">Part of the 30S ribosomal subunit. Forms a tight heterodimer with protein bS6.</text>
</comment>
<comment type="similarity">
    <text evidence="1">Belongs to the bacterial ribosomal protein bS18 family.</text>
</comment>
<name>RS18_METPB</name>